<organism>
    <name type="scientific">Dehalococcoides mccartyi (strain ATCC BAA-2100 / JCM 16839 / KCTC 5957 / BAV1)</name>
    <dbReference type="NCBI Taxonomy" id="216389"/>
    <lineage>
        <taxon>Bacteria</taxon>
        <taxon>Bacillati</taxon>
        <taxon>Chloroflexota</taxon>
        <taxon>Dehalococcoidia</taxon>
        <taxon>Dehalococcoidales</taxon>
        <taxon>Dehalococcoidaceae</taxon>
        <taxon>Dehalococcoides</taxon>
    </lineage>
</organism>
<protein>
    <recommendedName>
        <fullName evidence="1">Small ribosomal subunit protein uS9</fullName>
    </recommendedName>
    <alternativeName>
        <fullName evidence="3">30S ribosomal protein S9</fullName>
    </alternativeName>
</protein>
<name>RS9_DEHMB</name>
<keyword id="KW-0687">Ribonucleoprotein</keyword>
<keyword id="KW-0689">Ribosomal protein</keyword>
<accession>A5FRV9</accession>
<comment type="similarity">
    <text evidence="1">Belongs to the universal ribosomal protein uS9 family.</text>
</comment>
<proteinExistence type="inferred from homology"/>
<evidence type="ECO:0000255" key="1">
    <source>
        <dbReference type="HAMAP-Rule" id="MF_00532"/>
    </source>
</evidence>
<evidence type="ECO:0000256" key="2">
    <source>
        <dbReference type="SAM" id="MobiDB-lite"/>
    </source>
</evidence>
<evidence type="ECO:0000305" key="3"/>
<reference key="1">
    <citation type="submission" date="2007-05" db="EMBL/GenBank/DDBJ databases">
        <title>Complete sequence of Dehalococcoides sp. BAV1.</title>
        <authorList>
            <consortium name="US DOE Joint Genome Institute"/>
            <person name="Copeland A."/>
            <person name="Lucas S."/>
            <person name="Lapidus A."/>
            <person name="Barry K."/>
            <person name="Detter J.C."/>
            <person name="Glavina del Rio T."/>
            <person name="Hammon N."/>
            <person name="Israni S."/>
            <person name="Pitluck S."/>
            <person name="Lowry S."/>
            <person name="Clum A."/>
            <person name="Schmutz J."/>
            <person name="Larimer F."/>
            <person name="Land M."/>
            <person name="Hauser L."/>
            <person name="Kyrpides N."/>
            <person name="Kim E."/>
            <person name="Ritalahti K.M."/>
            <person name="Loeffler F."/>
            <person name="Richardson P."/>
        </authorList>
    </citation>
    <scope>NUCLEOTIDE SEQUENCE [LARGE SCALE GENOMIC DNA]</scope>
    <source>
        <strain>ATCC BAA-2100 / JCM 16839 / KCTC 5957 / BAV1</strain>
    </source>
</reference>
<sequence length="132" mass="14580">MVEKNTYFIGVGRRKTAVATVKLMSGNGVIVIDGKPIEERFTRIQERNVILNPMMVTDTMGKFNAVIKVLGGGVTGQSGAIAHGIARALEKTDEKLRATLKSNGLLTRDDRTKERKKPGLKRARKAPQYTKR</sequence>
<dbReference type="EMBL" id="CP000688">
    <property type="protein sequence ID" value="ABQ17068.1"/>
    <property type="molecule type" value="Genomic_DNA"/>
</dbReference>
<dbReference type="SMR" id="A5FRV9"/>
<dbReference type="KEGG" id="deb:DehaBAV1_0483"/>
<dbReference type="PATRIC" id="fig|216389.18.peg.526"/>
<dbReference type="HOGENOM" id="CLU_046483_2_1_0"/>
<dbReference type="GO" id="GO:0022627">
    <property type="term" value="C:cytosolic small ribosomal subunit"/>
    <property type="evidence" value="ECO:0007669"/>
    <property type="project" value="TreeGrafter"/>
</dbReference>
<dbReference type="GO" id="GO:0003723">
    <property type="term" value="F:RNA binding"/>
    <property type="evidence" value="ECO:0007669"/>
    <property type="project" value="TreeGrafter"/>
</dbReference>
<dbReference type="GO" id="GO:0003735">
    <property type="term" value="F:structural constituent of ribosome"/>
    <property type="evidence" value="ECO:0007669"/>
    <property type="project" value="InterPro"/>
</dbReference>
<dbReference type="GO" id="GO:0006412">
    <property type="term" value="P:translation"/>
    <property type="evidence" value="ECO:0007669"/>
    <property type="project" value="UniProtKB-UniRule"/>
</dbReference>
<dbReference type="FunFam" id="3.30.230.10:FF:000001">
    <property type="entry name" value="30S ribosomal protein S9"/>
    <property type="match status" value="1"/>
</dbReference>
<dbReference type="Gene3D" id="3.30.230.10">
    <property type="match status" value="1"/>
</dbReference>
<dbReference type="HAMAP" id="MF_00532_B">
    <property type="entry name" value="Ribosomal_uS9_B"/>
    <property type="match status" value="1"/>
</dbReference>
<dbReference type="InterPro" id="IPR020568">
    <property type="entry name" value="Ribosomal_Su5_D2-typ_SF"/>
</dbReference>
<dbReference type="InterPro" id="IPR000754">
    <property type="entry name" value="Ribosomal_uS9"/>
</dbReference>
<dbReference type="InterPro" id="IPR023035">
    <property type="entry name" value="Ribosomal_uS9_bac/plastid"/>
</dbReference>
<dbReference type="InterPro" id="IPR020574">
    <property type="entry name" value="Ribosomal_uS9_CS"/>
</dbReference>
<dbReference type="InterPro" id="IPR014721">
    <property type="entry name" value="Ribsml_uS5_D2-typ_fold_subgr"/>
</dbReference>
<dbReference type="NCBIfam" id="NF001099">
    <property type="entry name" value="PRK00132.1"/>
    <property type="match status" value="1"/>
</dbReference>
<dbReference type="PANTHER" id="PTHR21569">
    <property type="entry name" value="RIBOSOMAL PROTEIN S9"/>
    <property type="match status" value="1"/>
</dbReference>
<dbReference type="PANTHER" id="PTHR21569:SF1">
    <property type="entry name" value="SMALL RIBOSOMAL SUBUNIT PROTEIN US9M"/>
    <property type="match status" value="1"/>
</dbReference>
<dbReference type="Pfam" id="PF00380">
    <property type="entry name" value="Ribosomal_S9"/>
    <property type="match status" value="1"/>
</dbReference>
<dbReference type="SUPFAM" id="SSF54211">
    <property type="entry name" value="Ribosomal protein S5 domain 2-like"/>
    <property type="match status" value="1"/>
</dbReference>
<dbReference type="PROSITE" id="PS00360">
    <property type="entry name" value="RIBOSOMAL_S9"/>
    <property type="match status" value="1"/>
</dbReference>
<gene>
    <name evidence="1" type="primary">rpsI</name>
    <name type="ordered locus">DehaBAV1_0483</name>
</gene>
<feature type="chain" id="PRO_1000081814" description="Small ribosomal subunit protein uS9">
    <location>
        <begin position="1"/>
        <end position="132"/>
    </location>
</feature>
<feature type="region of interest" description="Disordered" evidence="2">
    <location>
        <begin position="100"/>
        <end position="132"/>
    </location>
</feature>
<feature type="compositionally biased region" description="Basic residues" evidence="2">
    <location>
        <begin position="114"/>
        <end position="132"/>
    </location>
</feature>